<reference key="1">
    <citation type="journal article" date="2004" name="Proc. Natl. Acad. Sci. U.S.A.">
        <title>Genome sequence of the enterobacterial phytopathogen Erwinia carotovora subsp. atroseptica and characterization of virulence factors.</title>
        <authorList>
            <person name="Bell K.S."/>
            <person name="Sebaihia M."/>
            <person name="Pritchard L."/>
            <person name="Holden M.T.G."/>
            <person name="Hyman L.J."/>
            <person name="Holeva M.C."/>
            <person name="Thomson N.R."/>
            <person name="Bentley S.D."/>
            <person name="Churcher L.J.C."/>
            <person name="Mungall K."/>
            <person name="Atkin R."/>
            <person name="Bason N."/>
            <person name="Brooks K."/>
            <person name="Chillingworth T."/>
            <person name="Clark K."/>
            <person name="Doggett J."/>
            <person name="Fraser A."/>
            <person name="Hance Z."/>
            <person name="Hauser H."/>
            <person name="Jagels K."/>
            <person name="Moule S."/>
            <person name="Norbertczak H."/>
            <person name="Ormond D."/>
            <person name="Price C."/>
            <person name="Quail M.A."/>
            <person name="Sanders M."/>
            <person name="Walker D."/>
            <person name="Whitehead S."/>
            <person name="Salmond G.P.C."/>
            <person name="Birch P.R.J."/>
            <person name="Parkhill J."/>
            <person name="Toth I.K."/>
        </authorList>
    </citation>
    <scope>NUCLEOTIDE SEQUENCE [LARGE SCALE GENOMIC DNA]</scope>
    <source>
        <strain>SCRI 1043 / ATCC BAA-672</strain>
    </source>
</reference>
<comment type="function">
    <text evidence="1">Specifically methylates the guanosine in position 1516 of 16S rRNA.</text>
</comment>
<comment type="catalytic activity">
    <reaction evidence="1">
        <text>guanosine(1516) in 16S rRNA + S-adenosyl-L-methionine = N(2)-methylguanosine(1516) in 16S rRNA + S-adenosyl-L-homocysteine + H(+)</text>
        <dbReference type="Rhea" id="RHEA:43220"/>
        <dbReference type="Rhea" id="RHEA-COMP:10412"/>
        <dbReference type="Rhea" id="RHEA-COMP:10413"/>
        <dbReference type="ChEBI" id="CHEBI:15378"/>
        <dbReference type="ChEBI" id="CHEBI:57856"/>
        <dbReference type="ChEBI" id="CHEBI:59789"/>
        <dbReference type="ChEBI" id="CHEBI:74269"/>
        <dbReference type="ChEBI" id="CHEBI:74481"/>
        <dbReference type="EC" id="2.1.1.242"/>
    </reaction>
</comment>
<comment type="subcellular location">
    <subcellularLocation>
        <location evidence="1">Cytoplasm</location>
    </subcellularLocation>
</comment>
<comment type="similarity">
    <text evidence="1">Belongs to the methyltransferase superfamily. RsmJ family.</text>
</comment>
<keyword id="KW-0963">Cytoplasm</keyword>
<keyword id="KW-0489">Methyltransferase</keyword>
<keyword id="KW-1185">Reference proteome</keyword>
<keyword id="KW-0698">rRNA processing</keyword>
<keyword id="KW-0949">S-adenosyl-L-methionine</keyword>
<keyword id="KW-0808">Transferase</keyword>
<protein>
    <recommendedName>
        <fullName evidence="1">Ribosomal RNA small subunit methyltransferase J</fullName>
        <ecNumber evidence="1">2.1.1.242</ecNumber>
    </recommendedName>
    <alternativeName>
        <fullName evidence="1">16S rRNA m2G1516 methyltransferase</fullName>
    </alternativeName>
    <alternativeName>
        <fullName evidence="1">rRNA (guanine-N(2)-)-methyltransferase</fullName>
    </alternativeName>
</protein>
<dbReference type="EC" id="2.1.1.242" evidence="1"/>
<dbReference type="EMBL" id="BX950851">
    <property type="protein sequence ID" value="CAG72975.1"/>
    <property type="molecule type" value="Genomic_DNA"/>
</dbReference>
<dbReference type="RefSeq" id="WP_011091699.1">
    <property type="nucleotide sequence ID" value="NC_004547.2"/>
</dbReference>
<dbReference type="SMR" id="Q6DB47"/>
<dbReference type="STRING" id="218491.ECA0054"/>
<dbReference type="GeneID" id="57206909"/>
<dbReference type="KEGG" id="eca:ECA0054"/>
<dbReference type="PATRIC" id="fig|218491.5.peg.57"/>
<dbReference type="eggNOG" id="COG0742">
    <property type="taxonomic scope" value="Bacteria"/>
</dbReference>
<dbReference type="HOGENOM" id="CLU_076324_0_0_6"/>
<dbReference type="OrthoDB" id="3191794at2"/>
<dbReference type="Proteomes" id="UP000007966">
    <property type="component" value="Chromosome"/>
</dbReference>
<dbReference type="GO" id="GO:0005737">
    <property type="term" value="C:cytoplasm"/>
    <property type="evidence" value="ECO:0007669"/>
    <property type="project" value="UniProtKB-SubCell"/>
</dbReference>
<dbReference type="GO" id="GO:0008990">
    <property type="term" value="F:rRNA (guanine-N2-)-methyltransferase activity"/>
    <property type="evidence" value="ECO:0007669"/>
    <property type="project" value="UniProtKB-UniRule"/>
</dbReference>
<dbReference type="CDD" id="cd02440">
    <property type="entry name" value="AdoMet_MTases"/>
    <property type="match status" value="1"/>
</dbReference>
<dbReference type="Gene3D" id="3.40.50.150">
    <property type="entry name" value="Vaccinia Virus protein VP39"/>
    <property type="match status" value="1"/>
</dbReference>
<dbReference type="Gene3D" id="3.40.1630.10">
    <property type="entry name" value="YhiQ-like domain"/>
    <property type="match status" value="1"/>
</dbReference>
<dbReference type="HAMAP" id="MF_01523">
    <property type="entry name" value="16SrRNA_methyltr_J"/>
    <property type="match status" value="1"/>
</dbReference>
<dbReference type="InterPro" id="IPR007536">
    <property type="entry name" value="16SrRNA_methylTrfase_J"/>
</dbReference>
<dbReference type="InterPro" id="IPR029063">
    <property type="entry name" value="SAM-dependent_MTases_sf"/>
</dbReference>
<dbReference type="NCBIfam" id="NF008012">
    <property type="entry name" value="PRK10742.1"/>
    <property type="match status" value="1"/>
</dbReference>
<dbReference type="PANTHER" id="PTHR36112">
    <property type="entry name" value="RIBOSOMAL RNA SMALL SUBUNIT METHYLTRANSFERASE J"/>
    <property type="match status" value="1"/>
</dbReference>
<dbReference type="PANTHER" id="PTHR36112:SF1">
    <property type="entry name" value="RIBOSOMAL RNA SMALL SUBUNIT METHYLTRANSFERASE J"/>
    <property type="match status" value="1"/>
</dbReference>
<dbReference type="Pfam" id="PF04445">
    <property type="entry name" value="SAM_MT"/>
    <property type="match status" value="1"/>
</dbReference>
<dbReference type="SUPFAM" id="SSF53335">
    <property type="entry name" value="S-adenosyl-L-methionine-dependent methyltransferases"/>
    <property type="match status" value="1"/>
</dbReference>
<feature type="chain" id="PRO_0000212067" description="Ribosomal RNA small subunit methyltransferase J">
    <location>
        <begin position="1"/>
        <end position="248"/>
    </location>
</feature>
<feature type="binding site" evidence="1">
    <location>
        <begin position="101"/>
        <end position="102"/>
    </location>
    <ligand>
        <name>S-adenosyl-L-methionine</name>
        <dbReference type="ChEBI" id="CHEBI:59789"/>
    </ligand>
</feature>
<feature type="binding site" evidence="1">
    <location>
        <begin position="117"/>
        <end position="118"/>
    </location>
    <ligand>
        <name>S-adenosyl-L-methionine</name>
        <dbReference type="ChEBI" id="CHEBI:59789"/>
    </ligand>
</feature>
<feature type="binding site" evidence="1">
    <location>
        <begin position="153"/>
        <end position="154"/>
    </location>
    <ligand>
        <name>S-adenosyl-L-methionine</name>
        <dbReference type="ChEBI" id="CHEBI:59789"/>
    </ligand>
</feature>
<feature type="binding site" evidence="1">
    <location>
        <position position="171"/>
    </location>
    <ligand>
        <name>S-adenosyl-L-methionine</name>
        <dbReference type="ChEBI" id="CHEBI:59789"/>
    </ligand>
</feature>
<proteinExistence type="inferred from homology"/>
<sequence length="248" mass="27007">MSICLIAEEGADSGALSSLAERWGLVSDPNAVMALVLTTERLELRKQDEPKLGAIFVDFVAGPMAHRRRFGGGRGEAVAKAVGIKKDYLPDVVDATAGLGRDAFVLAALGCHVRMVERNPVVAALLDDGLKRGYQDAEIGPWLRERLTLLHASSMTALRDITPPPDVVYLDPMFPHKQKSALVKKEMRVFQSLVGADDDADALLEPARALAKKRVVVKRPDYAPPLAGVPAQSMLETKSHRFDFYLPV</sequence>
<gene>
    <name evidence="1" type="primary">rsmJ</name>
    <name type="ordered locus">ECA0054</name>
</gene>
<evidence type="ECO:0000255" key="1">
    <source>
        <dbReference type="HAMAP-Rule" id="MF_01523"/>
    </source>
</evidence>
<accession>Q6DB47</accession>
<organism>
    <name type="scientific">Pectobacterium atrosepticum (strain SCRI 1043 / ATCC BAA-672)</name>
    <name type="common">Erwinia carotovora subsp. atroseptica</name>
    <dbReference type="NCBI Taxonomy" id="218491"/>
    <lineage>
        <taxon>Bacteria</taxon>
        <taxon>Pseudomonadati</taxon>
        <taxon>Pseudomonadota</taxon>
        <taxon>Gammaproteobacteria</taxon>
        <taxon>Enterobacterales</taxon>
        <taxon>Pectobacteriaceae</taxon>
        <taxon>Pectobacterium</taxon>
    </lineage>
</organism>
<name>RSMJ_PECAS</name>